<feature type="chain" id="PRO_0000094954" description="UPF0291 protein BCE_1981">
    <location>
        <begin position="1"/>
        <end position="76"/>
    </location>
</feature>
<comment type="subcellular location">
    <subcellularLocation>
        <location evidence="1">Cytoplasm</location>
    </subcellularLocation>
</comment>
<comment type="similarity">
    <text evidence="1">Belongs to the UPF0291 family.</text>
</comment>
<keyword id="KW-0963">Cytoplasm</keyword>
<reference key="1">
    <citation type="journal article" date="2004" name="Nucleic Acids Res.">
        <title>The genome sequence of Bacillus cereus ATCC 10987 reveals metabolic adaptations and a large plasmid related to Bacillus anthracis pXO1.</title>
        <authorList>
            <person name="Rasko D.A."/>
            <person name="Ravel J."/>
            <person name="Oekstad O.A."/>
            <person name="Helgason E."/>
            <person name="Cer R.Z."/>
            <person name="Jiang L."/>
            <person name="Shores K.A."/>
            <person name="Fouts D.E."/>
            <person name="Tourasse N.J."/>
            <person name="Angiuoli S.V."/>
            <person name="Kolonay J.F."/>
            <person name="Nelson W.C."/>
            <person name="Kolstoe A.-B."/>
            <person name="Fraser C.M."/>
            <person name="Read T.D."/>
        </authorList>
    </citation>
    <scope>NUCLEOTIDE SEQUENCE [LARGE SCALE GENOMIC DNA]</scope>
    <source>
        <strain>ATCC 10987 / NRS 248</strain>
    </source>
</reference>
<dbReference type="EMBL" id="AE017194">
    <property type="protein sequence ID" value="AAS40905.1"/>
    <property type="molecule type" value="Genomic_DNA"/>
</dbReference>
<dbReference type="SMR" id="P61461"/>
<dbReference type="KEGG" id="bca:BCE_1981"/>
<dbReference type="HOGENOM" id="CLU_173137_0_2_9"/>
<dbReference type="Proteomes" id="UP000002527">
    <property type="component" value="Chromosome"/>
</dbReference>
<dbReference type="GO" id="GO:0005737">
    <property type="term" value="C:cytoplasm"/>
    <property type="evidence" value="ECO:0007669"/>
    <property type="project" value="UniProtKB-SubCell"/>
</dbReference>
<dbReference type="Gene3D" id="1.10.287.540">
    <property type="entry name" value="Helix hairpin bin"/>
    <property type="match status" value="1"/>
</dbReference>
<dbReference type="HAMAP" id="MF_01103">
    <property type="entry name" value="UPF0291"/>
    <property type="match status" value="1"/>
</dbReference>
<dbReference type="InterPro" id="IPR009242">
    <property type="entry name" value="DUF896"/>
</dbReference>
<dbReference type="NCBIfam" id="NF002452">
    <property type="entry name" value="PRK01631.1"/>
    <property type="match status" value="1"/>
</dbReference>
<dbReference type="PANTHER" id="PTHR37300:SF2">
    <property type="entry name" value="UPF0291 PROTEIN BC_1827"/>
    <property type="match status" value="1"/>
</dbReference>
<dbReference type="PANTHER" id="PTHR37300">
    <property type="entry name" value="UPF0291 PROTEIN CBO2609/CLC_2481"/>
    <property type="match status" value="1"/>
</dbReference>
<dbReference type="Pfam" id="PF05979">
    <property type="entry name" value="DUF896"/>
    <property type="match status" value="1"/>
</dbReference>
<dbReference type="SUPFAM" id="SSF158221">
    <property type="entry name" value="YnzC-like"/>
    <property type="match status" value="1"/>
</dbReference>
<name>Y1981_BACC1</name>
<accession>P61461</accession>
<sequence length="76" mass="8728">MKNILFRINELSKKEKVSGLTVDEKQEQQMLRQNYTQTFRGSLDSILLNTKIVDQNGHNVTPAALQDAQIRLKLSK</sequence>
<protein>
    <recommendedName>
        <fullName evidence="1">UPF0291 protein BCE_1981</fullName>
    </recommendedName>
</protein>
<gene>
    <name type="ordered locus">BCE_1981</name>
</gene>
<organism>
    <name type="scientific">Bacillus cereus (strain ATCC 10987 / NRS 248)</name>
    <dbReference type="NCBI Taxonomy" id="222523"/>
    <lineage>
        <taxon>Bacteria</taxon>
        <taxon>Bacillati</taxon>
        <taxon>Bacillota</taxon>
        <taxon>Bacilli</taxon>
        <taxon>Bacillales</taxon>
        <taxon>Bacillaceae</taxon>
        <taxon>Bacillus</taxon>
        <taxon>Bacillus cereus group</taxon>
    </lineage>
</organism>
<proteinExistence type="inferred from homology"/>
<evidence type="ECO:0000255" key="1">
    <source>
        <dbReference type="HAMAP-Rule" id="MF_01103"/>
    </source>
</evidence>